<organism>
    <name type="scientific">Dictyostelium discoideum</name>
    <name type="common">Social amoeba</name>
    <dbReference type="NCBI Taxonomy" id="44689"/>
    <lineage>
        <taxon>Eukaryota</taxon>
        <taxon>Amoebozoa</taxon>
        <taxon>Evosea</taxon>
        <taxon>Eumycetozoa</taxon>
        <taxon>Dictyostelia</taxon>
        <taxon>Dictyosteliales</taxon>
        <taxon>Dictyosteliaceae</taxon>
        <taxon>Dictyostelium</taxon>
    </lineage>
</organism>
<comment type="function">
    <text evidence="1">Part of the small subunit (SSU) processome, first precursor of the small eukaryotic ribosomal subunit. During the assembly of the SSU processome in the nucleolus, many ribosome biogenesis factors, an RNA chaperone and ribosomal proteins associate with the nascent pre-rRNA and work in concert to generate RNA folding, modifications, rearrangements and cleavage as well as targeted degradation of pre-ribosomal RNA by the RNA exosome.</text>
</comment>
<comment type="subunit">
    <text evidence="1">Part of the small subunit (SSU) processome, composed of more than 70 proteins and the RNA chaperone small nucleolar RNA (snoRNA) U3.</text>
</comment>
<comment type="subcellular location">
    <subcellularLocation>
        <location evidence="1">Nucleus</location>
        <location evidence="1">Nucleolus</location>
    </subcellularLocation>
</comment>
<comment type="similarity">
    <text evidence="4">Belongs to the KRR1 family.</text>
</comment>
<sequence length="374" mass="43790">MGKKDKTEIKVEEENKEKKQYKKKKEREELEIPKGIDPWKPLELKRDDVGKRVLYDDSSFATLFPKYREKYLQEIWKLVENVLHEHGIECKLDLIEGSMTVTTTKKCWDPVAILKARDLIKLLSRSVPFEHAQKVLNDDYNCDIIKIGGFVRNKERFVKRRQRLVGPDGSTLKAIELLTKCYVLVQGNTVSSIGPWNGLVQVRKIVEDCLKNIHPIYNIKELMIKRELEKDETLKNENWERYLPQFKKTNQNKKKKVQKKKKDRDAAPFAPPQLPRKEDLAMESGEYFASEEKKRRKIQADREAKHAESDQKRKDERQKSQIAPAEKDRSTTTTTNTSNIQDTLSNIKNNLKNNKRKEAPTNNADDFVLKKNKK</sequence>
<accession>Q54UU6</accession>
<evidence type="ECO:0000250" key="1">
    <source>
        <dbReference type="UniProtKB" id="Q13601"/>
    </source>
</evidence>
<evidence type="ECO:0000255" key="2"/>
<evidence type="ECO:0000256" key="3">
    <source>
        <dbReference type="SAM" id="MobiDB-lite"/>
    </source>
</evidence>
<evidence type="ECO:0000305" key="4"/>
<proteinExistence type="inferred from homology"/>
<feature type="chain" id="PRO_0000342399" description="KRR1 small subunit processome component homolog">
    <location>
        <begin position="1"/>
        <end position="374"/>
    </location>
</feature>
<feature type="domain" description="KH">
    <location>
        <begin position="141"/>
        <end position="211"/>
    </location>
</feature>
<feature type="region of interest" description="Disordered" evidence="3">
    <location>
        <begin position="1"/>
        <end position="26"/>
    </location>
</feature>
<feature type="region of interest" description="Disordered" evidence="3">
    <location>
        <begin position="245"/>
        <end position="374"/>
    </location>
</feature>
<feature type="coiled-coil region" evidence="2">
    <location>
        <begin position="1"/>
        <end position="34"/>
    </location>
</feature>
<feature type="compositionally biased region" description="Basic and acidic residues" evidence="3">
    <location>
        <begin position="1"/>
        <end position="18"/>
    </location>
</feature>
<feature type="compositionally biased region" description="Basic residues" evidence="3">
    <location>
        <begin position="250"/>
        <end position="262"/>
    </location>
</feature>
<feature type="compositionally biased region" description="Basic and acidic residues" evidence="3">
    <location>
        <begin position="290"/>
        <end position="330"/>
    </location>
</feature>
<gene>
    <name type="primary">krr1</name>
    <name type="ORF">DDB_G0280805</name>
</gene>
<name>KRR1_DICDI</name>
<dbReference type="EMBL" id="AAFI02000038">
    <property type="protein sequence ID" value="EAL67060.1"/>
    <property type="molecule type" value="Genomic_DNA"/>
</dbReference>
<dbReference type="RefSeq" id="XP_641041.1">
    <property type="nucleotide sequence ID" value="XM_635949.1"/>
</dbReference>
<dbReference type="SMR" id="Q54UU6"/>
<dbReference type="FunCoup" id="Q54UU6">
    <property type="interactions" value="891"/>
</dbReference>
<dbReference type="STRING" id="44689.Q54UU6"/>
<dbReference type="PaxDb" id="44689-DDB0204743"/>
<dbReference type="EnsemblProtists" id="EAL67060">
    <property type="protein sequence ID" value="EAL67060"/>
    <property type="gene ID" value="DDB_G0280805"/>
</dbReference>
<dbReference type="GeneID" id="8622743"/>
<dbReference type="KEGG" id="ddi:DDB_G0280805"/>
<dbReference type="dictyBase" id="DDB_G0280805"/>
<dbReference type="VEuPathDB" id="AmoebaDB:DDB_G0280805"/>
<dbReference type="eggNOG" id="KOG2874">
    <property type="taxonomic scope" value="Eukaryota"/>
</dbReference>
<dbReference type="HOGENOM" id="CLU_040185_0_0_1"/>
<dbReference type="InParanoid" id="Q54UU6"/>
<dbReference type="OMA" id="TPDIDKW"/>
<dbReference type="PhylomeDB" id="Q54UU6"/>
<dbReference type="Reactome" id="R-DDI-6791226">
    <property type="pathway name" value="Major pathway of rRNA processing in the nucleolus and cytosol"/>
</dbReference>
<dbReference type="PRO" id="PR:Q54UU6"/>
<dbReference type="Proteomes" id="UP000002195">
    <property type="component" value="Chromosome 3"/>
</dbReference>
<dbReference type="GO" id="GO:0005730">
    <property type="term" value="C:nucleolus"/>
    <property type="evidence" value="ECO:0000318"/>
    <property type="project" value="GO_Central"/>
</dbReference>
<dbReference type="GO" id="GO:0032040">
    <property type="term" value="C:small-subunit processome"/>
    <property type="evidence" value="ECO:0000250"/>
    <property type="project" value="UniProtKB"/>
</dbReference>
<dbReference type="GO" id="GO:0003723">
    <property type="term" value="F:RNA binding"/>
    <property type="evidence" value="ECO:0007669"/>
    <property type="project" value="UniProtKB-KW"/>
</dbReference>
<dbReference type="GO" id="GO:0042274">
    <property type="term" value="P:ribosomal small subunit biogenesis"/>
    <property type="evidence" value="ECO:0000250"/>
    <property type="project" value="UniProtKB"/>
</dbReference>
<dbReference type="GO" id="GO:0006364">
    <property type="term" value="P:rRNA processing"/>
    <property type="evidence" value="ECO:0007669"/>
    <property type="project" value="UniProtKB-KW"/>
</dbReference>
<dbReference type="CDD" id="cd22393">
    <property type="entry name" value="KH-I_KRR1_rpt1"/>
    <property type="match status" value="1"/>
</dbReference>
<dbReference type="CDD" id="cd22394">
    <property type="entry name" value="KH-I_KRR1_rpt2"/>
    <property type="match status" value="1"/>
</dbReference>
<dbReference type="FunFam" id="3.30.1370.10:FF:000011">
    <property type="entry name" value="KRR1 small subunit processome component"/>
    <property type="match status" value="1"/>
</dbReference>
<dbReference type="FunFam" id="3.30.1370.10:FF:000014">
    <property type="entry name" value="KRR1 small subunit processome component"/>
    <property type="match status" value="1"/>
</dbReference>
<dbReference type="Gene3D" id="3.30.1370.10">
    <property type="entry name" value="K Homology domain, type 1"/>
    <property type="match status" value="2"/>
</dbReference>
<dbReference type="InterPro" id="IPR036612">
    <property type="entry name" value="KH_dom_type_1_sf"/>
</dbReference>
<dbReference type="InterPro" id="IPR041174">
    <property type="entry name" value="KRR1-like_KH1"/>
</dbReference>
<dbReference type="InterPro" id="IPR048550">
    <property type="entry name" value="KRR1-like_KH1_euk"/>
</dbReference>
<dbReference type="InterPro" id="IPR048548">
    <property type="entry name" value="KRR1-like_KH2"/>
</dbReference>
<dbReference type="InterPro" id="IPR048549">
    <property type="entry name" value="KRR1-like_KH2_euk"/>
</dbReference>
<dbReference type="InterPro" id="IPR024166">
    <property type="entry name" value="rRNA_assembly_KRR1"/>
</dbReference>
<dbReference type="PANTHER" id="PTHR12581">
    <property type="entry name" value="HIV-1 REV BINDING PROTEIN 2, 3"/>
    <property type="match status" value="1"/>
</dbReference>
<dbReference type="PANTHER" id="PTHR12581:SF0">
    <property type="entry name" value="KRR1 SMALL SUBUNIT PROCESSOME COMPONENT HOMOLOG"/>
    <property type="match status" value="1"/>
</dbReference>
<dbReference type="Pfam" id="PF17903">
    <property type="entry name" value="KH_KRR1_1st"/>
    <property type="match status" value="1"/>
</dbReference>
<dbReference type="Pfam" id="PF21800">
    <property type="entry name" value="KH_KRR1_2nd"/>
    <property type="match status" value="1"/>
</dbReference>
<dbReference type="PIRSF" id="PIRSF006515">
    <property type="entry name" value="KRR1"/>
    <property type="match status" value="1"/>
</dbReference>
<dbReference type="SUPFAM" id="SSF54791">
    <property type="entry name" value="Eukaryotic type KH-domain (KH-domain type I)"/>
    <property type="match status" value="1"/>
</dbReference>
<keyword id="KW-0175">Coiled coil</keyword>
<keyword id="KW-0539">Nucleus</keyword>
<keyword id="KW-1185">Reference proteome</keyword>
<keyword id="KW-0687">Ribonucleoprotein</keyword>
<keyword id="KW-0690">Ribosome biogenesis</keyword>
<keyword id="KW-0694">RNA-binding</keyword>
<keyword id="KW-0698">rRNA processing</keyword>
<reference key="1">
    <citation type="journal article" date="2005" name="Nature">
        <title>The genome of the social amoeba Dictyostelium discoideum.</title>
        <authorList>
            <person name="Eichinger L."/>
            <person name="Pachebat J.A."/>
            <person name="Gloeckner G."/>
            <person name="Rajandream M.A."/>
            <person name="Sucgang R."/>
            <person name="Berriman M."/>
            <person name="Song J."/>
            <person name="Olsen R."/>
            <person name="Szafranski K."/>
            <person name="Xu Q."/>
            <person name="Tunggal B."/>
            <person name="Kummerfeld S."/>
            <person name="Madera M."/>
            <person name="Konfortov B.A."/>
            <person name="Rivero F."/>
            <person name="Bankier A.T."/>
            <person name="Lehmann R."/>
            <person name="Hamlin N."/>
            <person name="Davies R."/>
            <person name="Gaudet P."/>
            <person name="Fey P."/>
            <person name="Pilcher K."/>
            <person name="Chen G."/>
            <person name="Saunders D."/>
            <person name="Sodergren E.J."/>
            <person name="Davis P."/>
            <person name="Kerhornou A."/>
            <person name="Nie X."/>
            <person name="Hall N."/>
            <person name="Anjard C."/>
            <person name="Hemphill L."/>
            <person name="Bason N."/>
            <person name="Farbrother P."/>
            <person name="Desany B."/>
            <person name="Just E."/>
            <person name="Morio T."/>
            <person name="Rost R."/>
            <person name="Churcher C.M."/>
            <person name="Cooper J."/>
            <person name="Haydock S."/>
            <person name="van Driessche N."/>
            <person name="Cronin A."/>
            <person name="Goodhead I."/>
            <person name="Muzny D.M."/>
            <person name="Mourier T."/>
            <person name="Pain A."/>
            <person name="Lu M."/>
            <person name="Harper D."/>
            <person name="Lindsay R."/>
            <person name="Hauser H."/>
            <person name="James K.D."/>
            <person name="Quiles M."/>
            <person name="Madan Babu M."/>
            <person name="Saito T."/>
            <person name="Buchrieser C."/>
            <person name="Wardroper A."/>
            <person name="Felder M."/>
            <person name="Thangavelu M."/>
            <person name="Johnson D."/>
            <person name="Knights A."/>
            <person name="Loulseged H."/>
            <person name="Mungall K.L."/>
            <person name="Oliver K."/>
            <person name="Price C."/>
            <person name="Quail M.A."/>
            <person name="Urushihara H."/>
            <person name="Hernandez J."/>
            <person name="Rabbinowitsch E."/>
            <person name="Steffen D."/>
            <person name="Sanders M."/>
            <person name="Ma J."/>
            <person name="Kohara Y."/>
            <person name="Sharp S."/>
            <person name="Simmonds M.N."/>
            <person name="Spiegler S."/>
            <person name="Tivey A."/>
            <person name="Sugano S."/>
            <person name="White B."/>
            <person name="Walker D."/>
            <person name="Woodward J.R."/>
            <person name="Winckler T."/>
            <person name="Tanaka Y."/>
            <person name="Shaulsky G."/>
            <person name="Schleicher M."/>
            <person name="Weinstock G.M."/>
            <person name="Rosenthal A."/>
            <person name="Cox E.C."/>
            <person name="Chisholm R.L."/>
            <person name="Gibbs R.A."/>
            <person name="Loomis W.F."/>
            <person name="Platzer M."/>
            <person name="Kay R.R."/>
            <person name="Williams J.G."/>
            <person name="Dear P.H."/>
            <person name="Noegel A.A."/>
            <person name="Barrell B.G."/>
            <person name="Kuspa A."/>
        </authorList>
    </citation>
    <scope>NUCLEOTIDE SEQUENCE [LARGE SCALE GENOMIC DNA]</scope>
    <source>
        <strain>AX4</strain>
    </source>
</reference>
<protein>
    <recommendedName>
        <fullName>KRR1 small subunit processome component homolog</fullName>
    </recommendedName>
    <alternativeName>
        <fullName>KRR-R motif-containing protein 1</fullName>
    </alternativeName>
</protein>